<proteinExistence type="evidence at protein level"/>
<name>SPZ4_HORVU</name>
<sequence>MATTLATDVRLSIAHQTRFALRLRSAISSNPERAAGNVAFSPLSLHVALSLITAGAAATRDQLVAILGDGGAGDAKELNALAEQVVQFVLANESSTGGPRIAFANGIFVDASLSLKPSFEELAVCQYKAKTQSVDFQHKTLEAVGQVNSWVEQVTTGLIKQILPPGSVDNTTKLILGNALYFKGAWDQKFDESNTKCDSFHLLDGSSIQTQFMSSTKKQYISSSDNLKVLKLPYAKGHDKRQFSMYILLPGAQDGLWSLAKRLSTEPEFIENHIPKQTVEVGRFQLPKFKISYQFEASSLLRALGLQLPFSEEADLSEMVDSSQGLEISHVFHKSFVEVNEEGTEAGAATVAMGVAMSMPLKVDLVDFVANHPFLFLIREDIAGVVVFVGHVTNPLISA</sequence>
<gene>
    <name type="primary">PAZ1</name>
</gene>
<keyword id="KW-0903">Direct protein sequencing</keyword>
<keyword id="KW-0611">Plant defense</keyword>
<keyword id="KW-0646">Protease inhibitor</keyword>
<keyword id="KW-0708">Seed storage protein</keyword>
<keyword id="KW-0722">Serine protease inhibitor</keyword>
<keyword id="KW-0758">Storage protein</keyword>
<accession>P06293</accession>
<accession>Q40076</accession>
<dbReference type="EMBL" id="X51726">
    <property type="protein sequence ID" value="CAA36015.1"/>
    <property type="molecule type" value="Genomic_DNA"/>
</dbReference>
<dbReference type="EMBL" id="X97636">
    <property type="protein sequence ID" value="CAA66232.1"/>
    <property type="molecule type" value="mRNA"/>
</dbReference>
<dbReference type="EMBL" id="X05902">
    <property type="protein sequence ID" value="CAA29331.1"/>
    <property type="molecule type" value="mRNA"/>
</dbReference>
<dbReference type="EMBL" id="M35065">
    <property type="protein sequence ID" value="AAA32971.1"/>
    <property type="molecule type" value="mRNA"/>
</dbReference>
<dbReference type="PIR" id="S13822">
    <property type="entry name" value="DXBHZ"/>
</dbReference>
<dbReference type="SMR" id="P06293"/>
<dbReference type="IntAct" id="P06293">
    <property type="interactions" value="1"/>
</dbReference>
<dbReference type="Allergome" id="951">
    <property type="allergen name" value="Hor v 33"/>
</dbReference>
<dbReference type="MEROPS" id="I04.065"/>
<dbReference type="ExpressionAtlas" id="P06293">
    <property type="expression patterns" value="baseline and differential"/>
</dbReference>
<dbReference type="GO" id="GO:0005615">
    <property type="term" value="C:extracellular space"/>
    <property type="evidence" value="ECO:0007669"/>
    <property type="project" value="InterPro"/>
</dbReference>
<dbReference type="GO" id="GO:0045735">
    <property type="term" value="F:nutrient reservoir activity"/>
    <property type="evidence" value="ECO:0007669"/>
    <property type="project" value="UniProtKB-KW"/>
</dbReference>
<dbReference type="GO" id="GO:0004867">
    <property type="term" value="F:serine-type endopeptidase inhibitor activity"/>
    <property type="evidence" value="ECO:0007669"/>
    <property type="project" value="UniProtKB-KW"/>
</dbReference>
<dbReference type="GO" id="GO:0006952">
    <property type="term" value="P:defense response"/>
    <property type="evidence" value="ECO:0007669"/>
    <property type="project" value="UniProtKB-KW"/>
</dbReference>
<dbReference type="CDD" id="cd02043">
    <property type="entry name" value="serpinP_plants"/>
    <property type="match status" value="1"/>
</dbReference>
<dbReference type="Gene3D" id="2.30.39.10">
    <property type="entry name" value="Alpha-1-antitrypsin, domain 1"/>
    <property type="match status" value="1"/>
</dbReference>
<dbReference type="Gene3D" id="3.30.497.10">
    <property type="entry name" value="Antithrombin, subunit I, domain 2"/>
    <property type="match status" value="1"/>
</dbReference>
<dbReference type="InterPro" id="IPR023795">
    <property type="entry name" value="Serpin_CS"/>
</dbReference>
<dbReference type="InterPro" id="IPR023796">
    <property type="entry name" value="Serpin_dom"/>
</dbReference>
<dbReference type="InterPro" id="IPR000215">
    <property type="entry name" value="Serpin_fam"/>
</dbReference>
<dbReference type="InterPro" id="IPR036186">
    <property type="entry name" value="Serpin_sf"/>
</dbReference>
<dbReference type="InterPro" id="IPR042178">
    <property type="entry name" value="Serpin_sf_1"/>
</dbReference>
<dbReference type="InterPro" id="IPR042185">
    <property type="entry name" value="Serpin_sf_2"/>
</dbReference>
<dbReference type="PANTHER" id="PTHR11461:SF211">
    <property type="entry name" value="GH10112P-RELATED"/>
    <property type="match status" value="1"/>
</dbReference>
<dbReference type="PANTHER" id="PTHR11461">
    <property type="entry name" value="SERINE PROTEASE INHIBITOR, SERPIN"/>
    <property type="match status" value="1"/>
</dbReference>
<dbReference type="Pfam" id="PF00079">
    <property type="entry name" value="Serpin"/>
    <property type="match status" value="1"/>
</dbReference>
<dbReference type="SMART" id="SM00093">
    <property type="entry name" value="SERPIN"/>
    <property type="match status" value="1"/>
</dbReference>
<dbReference type="SUPFAM" id="SSF56574">
    <property type="entry name" value="Serpins"/>
    <property type="match status" value="1"/>
</dbReference>
<dbReference type="PROSITE" id="PS00284">
    <property type="entry name" value="SERPIN"/>
    <property type="match status" value="1"/>
</dbReference>
<evidence type="ECO:0000250" key="1"/>
<evidence type="ECO:0000255" key="2"/>
<evidence type="ECO:0000269" key="3">
    <source>
    </source>
</evidence>
<evidence type="ECO:0000269" key="4">
    <source>
    </source>
</evidence>
<evidence type="ECO:0000305" key="5"/>
<organism>
    <name type="scientific">Hordeum vulgare</name>
    <name type="common">Barley</name>
    <dbReference type="NCBI Taxonomy" id="4513"/>
    <lineage>
        <taxon>Eukaryota</taxon>
        <taxon>Viridiplantae</taxon>
        <taxon>Streptophyta</taxon>
        <taxon>Embryophyta</taxon>
        <taxon>Tracheophyta</taxon>
        <taxon>Spermatophyta</taxon>
        <taxon>Magnoliopsida</taxon>
        <taxon>Liliopsida</taxon>
        <taxon>Poales</taxon>
        <taxon>Poaceae</taxon>
        <taxon>BOP clade</taxon>
        <taxon>Pooideae</taxon>
        <taxon>Triticodae</taxon>
        <taxon>Triticeae</taxon>
        <taxon>Hordeinae</taxon>
        <taxon>Hordeum</taxon>
    </lineage>
</organism>
<protein>
    <recommendedName>
        <fullName>Serpin-Z4</fullName>
    </recommendedName>
    <alternativeName>
        <fullName>BSZ4</fullName>
    </alternativeName>
    <alternativeName>
        <fullName>HorvuZ4</fullName>
    </alternativeName>
    <alternativeName>
        <fullName>Major endosperm albumin</fullName>
    </alternativeName>
    <alternativeName>
        <fullName>Protein Z4</fullName>
        <shortName>Protein Z</shortName>
    </alternativeName>
</protein>
<comment type="function">
    <text evidence="4">A major component of the endosperm albumin, this protein acts as a storage protein during grain filling, contributing a substantial part of the grain's lysine. May have an inhibitory function during filling or germination. Inhibits cathepsin G in vitro.</text>
</comment>
<comment type="tissue specificity">
    <text evidence="3">Highly expressed in embryo and endosperm. Is accumulated and stored in the endosperm, where it exists in a free and a bound form. Expressed in roots, coleoptiles, shoots and leaves.</text>
</comment>
<comment type="developmental stage">
    <text>Synthesized 10-25 days after fertilization (developing endosperm).</text>
</comment>
<comment type="induction">
    <text>Its expression is regulated by the 'high lysine' alleles Lys1 and Lys3a.</text>
</comment>
<comment type="domain">
    <text evidence="1">The reactive center loop (RCL) extends out from the body of the protein and directs binding to the target protease. The protease cleaves the serpin at the reactive site within the RCL, establishing a covalent linkage between the carboxyl group of the serpin reactive site and the serine hydroxyl of the protease. The resulting inactive serpin-protease complex is highly stable (By similarity).</text>
</comment>
<comment type="similarity">
    <text evidence="5">Belongs to the serpin family.</text>
</comment>
<feature type="chain" id="PRO_0000094133" description="Serpin-Z4">
    <location>
        <begin position="1"/>
        <end position="399"/>
    </location>
</feature>
<feature type="region of interest" description="Signal for targeting protein Z4 into the ER lumen" evidence="2">
    <location>
        <begin position="36"/>
        <end position="56"/>
    </location>
</feature>
<feature type="region of interest" description="RCL">
    <location>
        <begin position="343"/>
        <end position="367"/>
    </location>
</feature>
<feature type="site" description="Reactive bond" evidence="2">
    <location>
        <begin position="357"/>
        <end position="358"/>
    </location>
</feature>
<feature type="sequence conflict" description="In Ref. 2; CAA66232." evidence="5" ref="2">
    <original>R</original>
    <variation>A</variation>
    <location>
        <position position="24"/>
    </location>
</feature>
<feature type="sequence conflict" description="In Ref. 2; CAA66232." evidence="5" ref="2">
    <original>A</original>
    <variation>GG</variation>
    <location>
        <position position="57"/>
    </location>
</feature>
<feature type="sequence conflict" description="In Ref. 2; CAA66232." evidence="5" ref="2">
    <original>I</original>
    <variation>V</variation>
    <location>
        <position position="175"/>
    </location>
</feature>
<reference key="1">
    <citation type="journal article" date="1990" name="Eur. J. Biochem.">
        <title>A plant serpin gene. Structure, organization and expression of the gene encoding barley protein Z4.</title>
        <authorList>
            <person name="Brandt A."/>
            <person name="Svendsen I."/>
            <person name="Hejgaard J."/>
        </authorList>
    </citation>
    <scope>NUCLEOTIDE SEQUENCE [GENOMIC DNA]</scope>
    <scope>PARTIAL PROTEIN SEQUENCE</scope>
    <source>
        <strain>cv. Carlsberg II</strain>
        <tissue>Grain</tissue>
    </source>
</reference>
<reference key="2">
    <citation type="journal article" date="1996" name="J. Biol. Chem.">
        <title>Heterologous expression of three plant serpins with distinct inhibitory specificities.</title>
        <authorList>
            <person name="Dahl S.W."/>
            <person name="Rasmussen S.K."/>
            <person name="Hejgaard J."/>
        </authorList>
    </citation>
    <scope>NUCLEOTIDE SEQUENCE [MRNA]</scope>
    <scope>FUNCTION</scope>
    <scope>PARTIAL PROTEIN SEQUENCE</scope>
    <source>
        <strain>cv. Bomi</strain>
        <tissue>Endosperm</tissue>
    </source>
</reference>
<reference key="3">
    <citation type="journal article" date="1985" name="FEBS Lett.">
        <title>Sequence homology between barley endosperm protein Z and protease inhibitors of the alpha-1-antitrypsin family.</title>
        <authorList>
            <person name="Hejgaard J."/>
            <person name="Rasmussen S.K."/>
            <person name="Brandt A."/>
            <person name="Svendsen I."/>
        </authorList>
    </citation>
    <scope>NUCLEOTIDE SEQUENCE [MRNA] OF 220-399</scope>
    <scope>PARTIAL PROTEIN SEQUENCE</scope>
    <source>
        <strain>cv. Carlsberg II</strain>
        <tissue>Grain</tissue>
    </source>
</reference>
<reference key="4">
    <citation type="journal article" date="1984" name="Carlsberg Res. Commun.">
        <title>A cDNA clone for protein Z, a major barley endosperm albumin.</title>
        <authorList>
            <person name="Rasmussen S.K."/>
            <person name="Hopp H.E."/>
            <person name="Brandt A."/>
            <person name="Svendsen I."/>
            <person name="Hejgaard J."/>
        </authorList>
    </citation>
    <scope>NUCLEOTIDE SEQUENCE [MRNA] OF 360-384</scope>
</reference>
<reference key="5">
    <citation type="journal article" date="2003" name="J. Exp. Bot.">
        <title>Differential gene expression for suicide-substrate serine proteinase inhibitors (serpins) in vegetative and grain tissues of barley.</title>
        <authorList>
            <person name="Roberts T.H."/>
            <person name="Marttila S."/>
            <person name="Rasmussen S.K."/>
            <person name="Hejgaard J."/>
        </authorList>
    </citation>
    <scope>PROTEIN SEQUENCE OF 6-15 AND 362-367</scope>
    <scope>TISSUE SPECIFICITY</scope>
    <source>
        <strain>cv. Alexis</strain>
        <tissue>Root</tissue>
    </source>
</reference>